<keyword id="KW-0472">Membrane</keyword>
<keyword id="KW-0812">Transmembrane</keyword>
<keyword id="KW-1133">Transmembrane helix</keyword>
<protein>
    <recommendedName>
        <fullName>Putative uncharacterized protein YNL013C</fullName>
    </recommendedName>
</protein>
<comment type="subcellular location">
    <subcellularLocation>
        <location evidence="2">Membrane</location>
        <topology evidence="2">Multi-pass membrane protein</topology>
    </subcellularLocation>
</comment>
<comment type="miscellaneous">
    <text evidence="2">Partially overlaps HEF3.</text>
</comment>
<comment type="caution">
    <text evidence="3">Product of a dubious gene prediction unlikely to encode a functional protein. Because of that it is not part of the S.cerevisiae S288c complete/reference proteome set.</text>
</comment>
<gene>
    <name type="ordered locus">YNL013C</name>
    <name type="ORF">N2854</name>
</gene>
<accession>P53979</accession>
<name>YNB3_YEAST</name>
<dbReference type="EMBL" id="Z71290">
    <property type="protein sequence ID" value="CAA95875.1"/>
    <property type="molecule type" value="Genomic_DNA"/>
</dbReference>
<dbReference type="PIR" id="S62925">
    <property type="entry name" value="S62925"/>
</dbReference>
<dbReference type="DIP" id="DIP-2730N"/>
<dbReference type="IntAct" id="P53979">
    <property type="interactions" value="1"/>
</dbReference>
<dbReference type="MINT" id="P53979"/>
<dbReference type="STRING" id="4932.YNL013C"/>
<dbReference type="PaxDb" id="4932-YNL013C"/>
<dbReference type="EnsemblFungi" id="YNL013C_mRNA">
    <property type="protein sequence ID" value="YNL013C"/>
    <property type="gene ID" value="YNL013C"/>
</dbReference>
<dbReference type="AGR" id="SGD:S000004958"/>
<dbReference type="SGD" id="S000004958">
    <property type="gene designation" value="YNL013C"/>
</dbReference>
<dbReference type="HOGENOM" id="CLU_1994396_0_0_1"/>
<dbReference type="GO" id="GO:0016020">
    <property type="term" value="C:membrane"/>
    <property type="evidence" value="ECO:0007669"/>
    <property type="project" value="UniProtKB-SubCell"/>
</dbReference>
<reference key="1">
    <citation type="journal article" date="1997" name="Nature">
        <title>The nucleotide sequence of Saccharomyces cerevisiae chromosome XIV and its evolutionary implications.</title>
        <authorList>
            <person name="Philippsen P."/>
            <person name="Kleine K."/>
            <person name="Poehlmann R."/>
            <person name="Duesterhoeft A."/>
            <person name="Hamberg K."/>
            <person name="Hegemann J.H."/>
            <person name="Obermaier B."/>
            <person name="Urrestarazu L.A."/>
            <person name="Aert R."/>
            <person name="Albermann K."/>
            <person name="Altmann R."/>
            <person name="Andre B."/>
            <person name="Baladron V."/>
            <person name="Ballesta J.P.G."/>
            <person name="Becam A.-M."/>
            <person name="Beinhauer J.D."/>
            <person name="Boskovic J."/>
            <person name="Buitrago M.J."/>
            <person name="Bussereau F."/>
            <person name="Coster F."/>
            <person name="Crouzet M."/>
            <person name="D'Angelo M."/>
            <person name="Dal Pero F."/>
            <person name="De Antoni A."/>
            <person name="del Rey F."/>
            <person name="Doignon F."/>
            <person name="Domdey H."/>
            <person name="Dubois E."/>
            <person name="Fiedler T.A."/>
            <person name="Fleig U."/>
            <person name="Floeth M."/>
            <person name="Fritz C."/>
            <person name="Gaillardin C."/>
            <person name="Garcia-Cantalejo J.M."/>
            <person name="Glansdorff N."/>
            <person name="Goffeau A."/>
            <person name="Gueldener U."/>
            <person name="Herbert C.J."/>
            <person name="Heumann K."/>
            <person name="Heuss-Neitzel D."/>
            <person name="Hilbert H."/>
            <person name="Hinni K."/>
            <person name="Iraqui Houssaini I."/>
            <person name="Jacquet M."/>
            <person name="Jimenez A."/>
            <person name="Jonniaux J.-L."/>
            <person name="Karpfinger-Hartl L."/>
            <person name="Lanfranchi G."/>
            <person name="Lepingle A."/>
            <person name="Levesque H."/>
            <person name="Lyck R."/>
            <person name="Maftahi M."/>
            <person name="Mallet L."/>
            <person name="Maurer C.T.C."/>
            <person name="Messenguy F."/>
            <person name="Mewes H.-W."/>
            <person name="Moestl D."/>
            <person name="Nasr F."/>
            <person name="Nicaud J.-M."/>
            <person name="Niedenthal R.K."/>
            <person name="Pandolfo D."/>
            <person name="Pierard A."/>
            <person name="Piravandi E."/>
            <person name="Planta R.J."/>
            <person name="Pohl T.M."/>
            <person name="Purnelle B."/>
            <person name="Rebischung C."/>
            <person name="Remacha M.A."/>
            <person name="Revuelta J.L."/>
            <person name="Rinke M."/>
            <person name="Saiz J.E."/>
            <person name="Sartorello F."/>
            <person name="Scherens B."/>
            <person name="Sen-Gupta M."/>
            <person name="Soler-Mira A."/>
            <person name="Urbanus J.H.M."/>
            <person name="Valle G."/>
            <person name="Van Dyck L."/>
            <person name="Verhasselt P."/>
            <person name="Vierendeels F."/>
            <person name="Vissers S."/>
            <person name="Voet M."/>
            <person name="Volckaert G."/>
            <person name="Wach A."/>
            <person name="Wambutt R."/>
            <person name="Wedler H."/>
            <person name="Zollner A."/>
            <person name="Hani J."/>
        </authorList>
    </citation>
    <scope>NUCLEOTIDE SEQUENCE [LARGE SCALE GENOMIC DNA]</scope>
    <source>
        <strain>ATCC 204508 / S288c</strain>
    </source>
</reference>
<reference key="2">
    <citation type="journal article" date="2014" name="G3 (Bethesda)">
        <title>The reference genome sequence of Saccharomyces cerevisiae: Then and now.</title>
        <authorList>
            <person name="Engel S.R."/>
            <person name="Dietrich F.S."/>
            <person name="Fisk D.G."/>
            <person name="Binkley G."/>
            <person name="Balakrishnan R."/>
            <person name="Costanzo M.C."/>
            <person name="Dwight S.S."/>
            <person name="Hitz B.C."/>
            <person name="Karra K."/>
            <person name="Nash R.S."/>
            <person name="Weng S."/>
            <person name="Wong E.D."/>
            <person name="Lloyd P."/>
            <person name="Skrzypek M.S."/>
            <person name="Miyasato S.R."/>
            <person name="Simison M."/>
            <person name="Cherry J.M."/>
        </authorList>
    </citation>
    <scope>GENOME REANNOTATION</scope>
    <source>
        <strain>ATCC 204508 / S288c</strain>
    </source>
</reference>
<proteinExistence type="uncertain"/>
<sequence>MLTSKIYKLLTERDVLDFKLKIFIRRNVFITHLFFLLHSLLLFLSQFCRREFAFFLPTINLVTHSIKFITLFFFFLNSWASTLSCNPIMARGCHFPILNRPNFVSQILSKFCRMRNNNDTTFKSF</sequence>
<evidence type="ECO:0000255" key="1"/>
<evidence type="ECO:0000305" key="2"/>
<evidence type="ECO:0000305" key="3">
    <source>
    </source>
</evidence>
<feature type="chain" id="PRO_0000203464" description="Putative uncharacterized protein YNL013C">
    <location>
        <begin position="1"/>
        <end position="125"/>
    </location>
</feature>
<feature type="transmembrane region" description="Helical" evidence="1">
    <location>
        <begin position="28"/>
        <end position="48"/>
    </location>
</feature>
<feature type="transmembrane region" description="Helical" evidence="1">
    <location>
        <begin position="54"/>
        <end position="74"/>
    </location>
</feature>
<organism>
    <name type="scientific">Saccharomyces cerevisiae (strain ATCC 204508 / S288c)</name>
    <name type="common">Baker's yeast</name>
    <dbReference type="NCBI Taxonomy" id="559292"/>
    <lineage>
        <taxon>Eukaryota</taxon>
        <taxon>Fungi</taxon>
        <taxon>Dikarya</taxon>
        <taxon>Ascomycota</taxon>
        <taxon>Saccharomycotina</taxon>
        <taxon>Saccharomycetes</taxon>
        <taxon>Saccharomycetales</taxon>
        <taxon>Saccharomycetaceae</taxon>
        <taxon>Saccharomyces</taxon>
    </lineage>
</organism>